<name>CYAY_ACTP2</name>
<proteinExistence type="inferred from homology"/>
<reference key="1">
    <citation type="journal article" date="2008" name="J. Bacteriol.">
        <title>The complete genome sequence of Actinobacillus pleuropneumoniae L20 (serotype 5b).</title>
        <authorList>
            <person name="Foote S.J."/>
            <person name="Bosse J.T."/>
            <person name="Bouevitch A.B."/>
            <person name="Langford P.R."/>
            <person name="Young N.M."/>
            <person name="Nash J.H.E."/>
        </authorList>
    </citation>
    <scope>NUCLEOTIDE SEQUENCE [LARGE SCALE GENOMIC DNA]</scope>
    <source>
        <strain>L20</strain>
    </source>
</reference>
<keyword id="KW-0408">Iron</keyword>
<keyword id="KW-0479">Metal-binding</keyword>
<keyword id="KW-1185">Reference proteome</keyword>
<gene>
    <name evidence="1" type="primary">cyaY</name>
    <name type="ordered locus">APL_1117</name>
</gene>
<evidence type="ECO:0000255" key="1">
    <source>
        <dbReference type="HAMAP-Rule" id="MF_00142"/>
    </source>
</evidence>
<sequence length="101" mass="11712">MNVAEFHQKVEQVWQQIEEKIDDEALSIDTEIHGAVCTLTFDDESQIIINKQEAMLELWLASKLGGFHFAFRDGEWVTAEGRSFWTHLEEAFARHGEQISF</sequence>
<protein>
    <recommendedName>
        <fullName evidence="1">Iron-sulfur cluster assembly protein CyaY</fullName>
    </recommendedName>
</protein>
<dbReference type="EMBL" id="CP000569">
    <property type="protein sequence ID" value="ABN74209.1"/>
    <property type="molecule type" value="Genomic_DNA"/>
</dbReference>
<dbReference type="RefSeq" id="WP_005604853.1">
    <property type="nucleotide sequence ID" value="NC_009053.1"/>
</dbReference>
<dbReference type="SMR" id="A3N1C3"/>
<dbReference type="STRING" id="416269.APL_1117"/>
<dbReference type="EnsemblBacteria" id="ABN74209">
    <property type="protein sequence ID" value="ABN74209"/>
    <property type="gene ID" value="APL_1117"/>
</dbReference>
<dbReference type="KEGG" id="apl:APL_1117"/>
<dbReference type="eggNOG" id="COG1965">
    <property type="taxonomic scope" value="Bacteria"/>
</dbReference>
<dbReference type="HOGENOM" id="CLU_080880_3_0_6"/>
<dbReference type="Proteomes" id="UP000001432">
    <property type="component" value="Chromosome"/>
</dbReference>
<dbReference type="GO" id="GO:0005737">
    <property type="term" value="C:cytoplasm"/>
    <property type="evidence" value="ECO:0007669"/>
    <property type="project" value="UniProtKB-ARBA"/>
</dbReference>
<dbReference type="GO" id="GO:0008199">
    <property type="term" value="F:ferric iron binding"/>
    <property type="evidence" value="ECO:0007669"/>
    <property type="project" value="InterPro"/>
</dbReference>
<dbReference type="GO" id="GO:0016226">
    <property type="term" value="P:iron-sulfur cluster assembly"/>
    <property type="evidence" value="ECO:0007669"/>
    <property type="project" value="UniProtKB-UniRule"/>
</dbReference>
<dbReference type="Gene3D" id="3.30.920.10">
    <property type="entry name" value="Frataxin/CyaY"/>
    <property type="match status" value="1"/>
</dbReference>
<dbReference type="HAMAP" id="MF_00142">
    <property type="entry name" value="CyaY"/>
    <property type="match status" value="1"/>
</dbReference>
<dbReference type="InterPro" id="IPR047584">
    <property type="entry name" value="CyaY"/>
</dbReference>
<dbReference type="InterPro" id="IPR002908">
    <property type="entry name" value="Frataxin/CyaY"/>
</dbReference>
<dbReference type="InterPro" id="IPR036524">
    <property type="entry name" value="Frataxin/CyaY_sf"/>
</dbReference>
<dbReference type="InterPro" id="IPR020895">
    <property type="entry name" value="Frataxin_CS"/>
</dbReference>
<dbReference type="NCBIfam" id="TIGR03421">
    <property type="entry name" value="FeS_CyaY"/>
    <property type="match status" value="1"/>
</dbReference>
<dbReference type="Pfam" id="PF01491">
    <property type="entry name" value="Frataxin_Cyay"/>
    <property type="match status" value="1"/>
</dbReference>
<dbReference type="SMART" id="SM01219">
    <property type="entry name" value="Frataxin_Cyay"/>
    <property type="match status" value="1"/>
</dbReference>
<dbReference type="SUPFAM" id="SSF55387">
    <property type="entry name" value="Frataxin/Nqo15-like"/>
    <property type="match status" value="1"/>
</dbReference>
<dbReference type="PROSITE" id="PS01344">
    <property type="entry name" value="FRATAXIN_1"/>
    <property type="match status" value="1"/>
</dbReference>
<dbReference type="PROSITE" id="PS50810">
    <property type="entry name" value="FRATAXIN_2"/>
    <property type="match status" value="1"/>
</dbReference>
<comment type="function">
    <text evidence="1">Involved in iron-sulfur (Fe-S) cluster assembly. May act as a regulator of Fe-S biogenesis.</text>
</comment>
<comment type="similarity">
    <text evidence="1">Belongs to the frataxin family.</text>
</comment>
<accession>A3N1C3</accession>
<organism>
    <name type="scientific">Actinobacillus pleuropneumoniae serotype 5b (strain L20)</name>
    <dbReference type="NCBI Taxonomy" id="416269"/>
    <lineage>
        <taxon>Bacteria</taxon>
        <taxon>Pseudomonadati</taxon>
        <taxon>Pseudomonadota</taxon>
        <taxon>Gammaproteobacteria</taxon>
        <taxon>Pasteurellales</taxon>
        <taxon>Pasteurellaceae</taxon>
        <taxon>Actinobacillus</taxon>
    </lineage>
</organism>
<feature type="chain" id="PRO_1000010908" description="Iron-sulfur cluster assembly protein CyaY">
    <location>
        <begin position="1"/>
        <end position="101"/>
    </location>
</feature>